<proteinExistence type="evidence at protein level"/>
<evidence type="ECO:0000305" key="1"/>
<accession>P16351</accession>
<dbReference type="PIR" id="S08292">
    <property type="entry name" value="S08292"/>
</dbReference>
<dbReference type="GO" id="GO:0030246">
    <property type="term" value="F:carbohydrate binding"/>
    <property type="evidence" value="ECO:0007669"/>
    <property type="project" value="UniProtKB-KW"/>
</dbReference>
<comment type="function">
    <text>Agglutinates erythrocytes of blood group A. Binds in decreasing order of affinity: N-acetyl-D-galactosamine, D-galactose, and D-galactosamine.</text>
</comment>
<comment type="subunit">
    <text>Homotetramer.</text>
</comment>
<comment type="similarity">
    <text evidence="1">Belongs to the leguminous lectin family.</text>
</comment>
<organism>
    <name type="scientific">Crotalaria pallida</name>
    <name type="common">Smooth rattlebox</name>
    <name type="synonym">Crotalaria striata</name>
    <dbReference type="NCBI Taxonomy" id="3830"/>
    <lineage>
        <taxon>Eukaryota</taxon>
        <taxon>Viridiplantae</taxon>
        <taxon>Streptophyta</taxon>
        <taxon>Embryophyta</taxon>
        <taxon>Tracheophyta</taxon>
        <taxon>Spermatophyta</taxon>
        <taxon>Magnoliopsida</taxon>
        <taxon>eudicotyledons</taxon>
        <taxon>Gunneridae</taxon>
        <taxon>Pentapetalae</taxon>
        <taxon>rosids</taxon>
        <taxon>fabids</taxon>
        <taxon>Fabales</taxon>
        <taxon>Fabaceae</taxon>
        <taxon>Papilionoideae</taxon>
        <taxon>50 kb inversion clade</taxon>
        <taxon>genistoids sensu lato</taxon>
        <taxon>core genistoids</taxon>
        <taxon>Crotalarieae</taxon>
        <taxon>Crotalaria</taxon>
    </lineage>
</organism>
<reference key="1">
    <citation type="journal article" date="1990" name="Biochim. Biophys. Acta">
        <title>A blood group A specific lectin from the seeds of Crotalaria striata.</title>
        <authorList>
            <person name="Khang N.Q."/>
            <person name="Guillaume J.-L."/>
            <person name="Hoebeke J."/>
        </authorList>
    </citation>
    <scope>PROTEIN SEQUENCE</scope>
    <source>
        <tissue>Seed</tissue>
    </source>
</reference>
<name>LEC_CROPI</name>
<feature type="chain" id="PRO_0000105091" description="Lectin">
    <location>
        <begin position="1"/>
        <end position="24" status="greater than"/>
    </location>
</feature>
<feature type="non-terminal residue">
    <location>
        <position position="24"/>
    </location>
</feature>
<sequence length="24" mass="2875">LEEQSFSFTKFSTDQQNLILQAHY</sequence>
<protein>
    <recommendedName>
        <fullName>Lectin</fullName>
    </recommendedName>
</protein>
<keyword id="KW-0903">Direct protein sequencing</keyword>
<keyword id="KW-0430">Lectin</keyword>